<proteinExistence type="inferred from homology"/>
<organism>
    <name type="scientific">Legionella pneumophila subsp. pneumophila (strain Philadelphia 1 / ATCC 33152 / DSM 7513)</name>
    <dbReference type="NCBI Taxonomy" id="272624"/>
    <lineage>
        <taxon>Bacteria</taxon>
        <taxon>Pseudomonadati</taxon>
        <taxon>Pseudomonadota</taxon>
        <taxon>Gammaproteobacteria</taxon>
        <taxon>Legionellales</taxon>
        <taxon>Legionellaceae</taxon>
        <taxon>Legionella</taxon>
    </lineage>
</organism>
<sequence>MALHLGVITLLPEIIQGIHYGVTGRAIEQGLVKIDCWNPRDWSSRPYKQVDDKPYGGGPGMVMMYEPLHAAIKHARSEMKENCKTIYLSPQGKVVRQNDLKQIAAQKQSLLFVAGRYEGIDERIISHHVDEEWSLGDFVLSGGELAAMVFIDAIIRLIPGSLGHLGSAEQDSFMNGLLDCPHYTRPATINGLDVPDVLLGGNHKEIERWRRKQSLGKTWLKRPDLLEKVQLSETDKQLLAEFKCEHGDSC</sequence>
<keyword id="KW-0963">Cytoplasm</keyword>
<keyword id="KW-0489">Methyltransferase</keyword>
<keyword id="KW-1185">Reference proteome</keyword>
<keyword id="KW-0949">S-adenosyl-L-methionine</keyword>
<keyword id="KW-0808">Transferase</keyword>
<keyword id="KW-0819">tRNA processing</keyword>
<comment type="function">
    <text evidence="1">Specifically methylates guanosine-37 in various tRNAs.</text>
</comment>
<comment type="catalytic activity">
    <reaction evidence="1">
        <text>guanosine(37) in tRNA + S-adenosyl-L-methionine = N(1)-methylguanosine(37) in tRNA + S-adenosyl-L-homocysteine + H(+)</text>
        <dbReference type="Rhea" id="RHEA:36899"/>
        <dbReference type="Rhea" id="RHEA-COMP:10145"/>
        <dbReference type="Rhea" id="RHEA-COMP:10147"/>
        <dbReference type="ChEBI" id="CHEBI:15378"/>
        <dbReference type="ChEBI" id="CHEBI:57856"/>
        <dbReference type="ChEBI" id="CHEBI:59789"/>
        <dbReference type="ChEBI" id="CHEBI:73542"/>
        <dbReference type="ChEBI" id="CHEBI:74269"/>
        <dbReference type="EC" id="2.1.1.228"/>
    </reaction>
</comment>
<comment type="subunit">
    <text evidence="1">Homodimer.</text>
</comment>
<comment type="subcellular location">
    <subcellularLocation>
        <location evidence="1">Cytoplasm</location>
    </subcellularLocation>
</comment>
<comment type="similarity">
    <text evidence="1">Belongs to the RNA methyltransferase TrmD family.</text>
</comment>
<comment type="sequence caution" evidence="2">
    <conflict type="erroneous initiation">
        <sequence resource="EMBL-CDS" id="AAU26493"/>
    </conflict>
</comment>
<dbReference type="EC" id="2.1.1.228" evidence="1"/>
<dbReference type="EMBL" id="AE017354">
    <property type="protein sequence ID" value="AAU26493.1"/>
    <property type="status" value="ALT_INIT"/>
    <property type="molecule type" value="Genomic_DNA"/>
</dbReference>
<dbReference type="RefSeq" id="WP_015444853.1">
    <property type="nucleotide sequence ID" value="NC_002942.5"/>
</dbReference>
<dbReference type="RefSeq" id="YP_094440.1">
    <property type="nucleotide sequence ID" value="NC_002942.5"/>
</dbReference>
<dbReference type="SMR" id="Q5ZYH6"/>
<dbReference type="STRING" id="272624.lpg0396"/>
<dbReference type="PaxDb" id="272624-lpg0396"/>
<dbReference type="GeneID" id="57034400"/>
<dbReference type="KEGG" id="lpn:lpg0396"/>
<dbReference type="PATRIC" id="fig|272624.6.peg.410"/>
<dbReference type="eggNOG" id="COG0336">
    <property type="taxonomic scope" value="Bacteria"/>
</dbReference>
<dbReference type="HOGENOM" id="CLU_047363_0_1_6"/>
<dbReference type="OrthoDB" id="9807416at2"/>
<dbReference type="Proteomes" id="UP000000609">
    <property type="component" value="Chromosome"/>
</dbReference>
<dbReference type="GO" id="GO:0005829">
    <property type="term" value="C:cytosol"/>
    <property type="evidence" value="ECO:0007669"/>
    <property type="project" value="TreeGrafter"/>
</dbReference>
<dbReference type="GO" id="GO:0052906">
    <property type="term" value="F:tRNA (guanine(37)-N1)-methyltransferase activity"/>
    <property type="evidence" value="ECO:0007669"/>
    <property type="project" value="UniProtKB-UniRule"/>
</dbReference>
<dbReference type="GO" id="GO:0002939">
    <property type="term" value="P:tRNA N1-guanine methylation"/>
    <property type="evidence" value="ECO:0007669"/>
    <property type="project" value="TreeGrafter"/>
</dbReference>
<dbReference type="CDD" id="cd18080">
    <property type="entry name" value="TrmD-like"/>
    <property type="match status" value="1"/>
</dbReference>
<dbReference type="FunFam" id="1.10.1270.20:FF:000001">
    <property type="entry name" value="tRNA (guanine-N(1)-)-methyltransferase"/>
    <property type="match status" value="1"/>
</dbReference>
<dbReference type="FunFam" id="3.40.1280.10:FF:000001">
    <property type="entry name" value="tRNA (guanine-N(1)-)-methyltransferase"/>
    <property type="match status" value="1"/>
</dbReference>
<dbReference type="Gene3D" id="3.40.1280.10">
    <property type="match status" value="1"/>
</dbReference>
<dbReference type="Gene3D" id="1.10.1270.20">
    <property type="entry name" value="tRNA(m1g37)methyltransferase, domain 2"/>
    <property type="match status" value="1"/>
</dbReference>
<dbReference type="HAMAP" id="MF_00605">
    <property type="entry name" value="TrmD"/>
    <property type="match status" value="1"/>
</dbReference>
<dbReference type="InterPro" id="IPR029028">
    <property type="entry name" value="Alpha/beta_knot_MTases"/>
</dbReference>
<dbReference type="InterPro" id="IPR023148">
    <property type="entry name" value="tRNA_m1G_MeTrfase_C_sf"/>
</dbReference>
<dbReference type="InterPro" id="IPR002649">
    <property type="entry name" value="tRNA_m1G_MeTrfase_TrmD"/>
</dbReference>
<dbReference type="InterPro" id="IPR029026">
    <property type="entry name" value="tRNA_m1G_MTases_N"/>
</dbReference>
<dbReference type="InterPro" id="IPR016009">
    <property type="entry name" value="tRNA_MeTrfase_TRMD/TRM10"/>
</dbReference>
<dbReference type="NCBIfam" id="NF000648">
    <property type="entry name" value="PRK00026.1"/>
    <property type="match status" value="1"/>
</dbReference>
<dbReference type="NCBIfam" id="TIGR00088">
    <property type="entry name" value="trmD"/>
    <property type="match status" value="1"/>
</dbReference>
<dbReference type="PANTHER" id="PTHR46417">
    <property type="entry name" value="TRNA (GUANINE-N(1)-)-METHYLTRANSFERASE"/>
    <property type="match status" value="1"/>
</dbReference>
<dbReference type="PANTHER" id="PTHR46417:SF1">
    <property type="entry name" value="TRNA (GUANINE-N(1)-)-METHYLTRANSFERASE"/>
    <property type="match status" value="1"/>
</dbReference>
<dbReference type="Pfam" id="PF01746">
    <property type="entry name" value="tRNA_m1G_MT"/>
    <property type="match status" value="1"/>
</dbReference>
<dbReference type="PIRSF" id="PIRSF000386">
    <property type="entry name" value="tRNA_mtase"/>
    <property type="match status" value="1"/>
</dbReference>
<dbReference type="SUPFAM" id="SSF75217">
    <property type="entry name" value="alpha/beta knot"/>
    <property type="match status" value="1"/>
</dbReference>
<feature type="chain" id="PRO_0000060397" description="tRNA (guanine-N(1)-)-methyltransferase">
    <location>
        <begin position="1"/>
        <end position="250"/>
    </location>
</feature>
<feature type="binding site" evidence="1">
    <location>
        <position position="115"/>
    </location>
    <ligand>
        <name>S-adenosyl-L-methionine</name>
        <dbReference type="ChEBI" id="CHEBI:59789"/>
    </ligand>
</feature>
<feature type="binding site" evidence="1">
    <location>
        <begin position="135"/>
        <end position="140"/>
    </location>
    <ligand>
        <name>S-adenosyl-L-methionine</name>
        <dbReference type="ChEBI" id="CHEBI:59789"/>
    </ligand>
</feature>
<accession>Q5ZYH6</accession>
<reference key="1">
    <citation type="journal article" date="2004" name="Science">
        <title>The genomic sequence of the accidental pathogen Legionella pneumophila.</title>
        <authorList>
            <person name="Chien M."/>
            <person name="Morozova I."/>
            <person name="Shi S."/>
            <person name="Sheng H."/>
            <person name="Chen J."/>
            <person name="Gomez S.M."/>
            <person name="Asamani G."/>
            <person name="Hill K."/>
            <person name="Nuara J."/>
            <person name="Feder M."/>
            <person name="Rineer J."/>
            <person name="Greenberg J.J."/>
            <person name="Steshenko V."/>
            <person name="Park S.H."/>
            <person name="Zhao B."/>
            <person name="Teplitskaya E."/>
            <person name="Edwards J.R."/>
            <person name="Pampou S."/>
            <person name="Georghiou A."/>
            <person name="Chou I.-C."/>
            <person name="Iannuccilli W."/>
            <person name="Ulz M.E."/>
            <person name="Kim D.H."/>
            <person name="Geringer-Sameth A."/>
            <person name="Goldsberry C."/>
            <person name="Morozov P."/>
            <person name="Fischer S.G."/>
            <person name="Segal G."/>
            <person name="Qu X."/>
            <person name="Rzhetsky A."/>
            <person name="Zhang P."/>
            <person name="Cayanis E."/>
            <person name="De Jong P.J."/>
            <person name="Ju J."/>
            <person name="Kalachikov S."/>
            <person name="Shuman H.A."/>
            <person name="Russo J.J."/>
        </authorList>
    </citation>
    <scope>NUCLEOTIDE SEQUENCE [LARGE SCALE GENOMIC DNA]</scope>
    <source>
        <strain>Philadelphia 1 / ATCC 33152 / DSM 7513</strain>
    </source>
</reference>
<gene>
    <name evidence="1" type="primary">trmD</name>
    <name type="ordered locus">lpg0396</name>
</gene>
<evidence type="ECO:0000255" key="1">
    <source>
        <dbReference type="HAMAP-Rule" id="MF_00605"/>
    </source>
</evidence>
<evidence type="ECO:0000305" key="2"/>
<protein>
    <recommendedName>
        <fullName evidence="1">tRNA (guanine-N(1)-)-methyltransferase</fullName>
        <ecNumber evidence="1">2.1.1.228</ecNumber>
    </recommendedName>
    <alternativeName>
        <fullName evidence="1">M1G-methyltransferase</fullName>
    </alternativeName>
    <alternativeName>
        <fullName evidence="1">tRNA [GM37] methyltransferase</fullName>
    </alternativeName>
</protein>
<name>TRMD_LEGPH</name>